<gene>
    <name type="primary">yop1</name>
    <name type="ORF">AFUA_5G06320</name>
</gene>
<sequence length="169" mass="19069">MASFQDRAQHTIAQLDKELSKYPVLNNLERQTSVPKVYVILGLVGIYTFLVFFNIAGEFLVNFAGFLIPGYYSLNALFTSGKADDTQWLTYWVVYALLTVVESAINAAYWFPFYYIFKFVLILWMSLPQTNGAQVVFHSFLQPVLGRFFTSGSTSANLRAQADAASKSQ</sequence>
<accession>Q4WTW3</accession>
<comment type="function">
    <text evidence="1">Required to generate and maintain the structure of the tubular endoplasmic reticulum network and the vacuole. Induces high curvature in membranes and causes membrane tubule formation. Involved in membrane/vesicle trafficking.</text>
</comment>
<comment type="subunit">
    <text evidence="1">Oligomer.</text>
</comment>
<comment type="subcellular location">
    <subcellularLocation>
        <location evidence="1">Endoplasmic reticulum membrane</location>
        <topology evidence="1">Multi-pass membrane protein</topology>
    </subcellularLocation>
    <subcellularLocation>
        <location evidence="1">Golgi apparatus membrane</location>
        <topology evidence="2">Multi-pass membrane protein</topology>
    </subcellularLocation>
</comment>
<comment type="domain">
    <text evidence="1">The short lumenal loops between transmembrane domains 1 and 2 and between transmembrane domains 3 and 4 may impart a wedge-like configuration, thus deforming membranes.</text>
</comment>
<comment type="similarity">
    <text evidence="3">Belongs to the DP1 family.</text>
</comment>
<organism>
    <name type="scientific">Aspergillus fumigatus (strain ATCC MYA-4609 / CBS 101355 / FGSC A1100 / Af293)</name>
    <name type="common">Neosartorya fumigata</name>
    <dbReference type="NCBI Taxonomy" id="330879"/>
    <lineage>
        <taxon>Eukaryota</taxon>
        <taxon>Fungi</taxon>
        <taxon>Dikarya</taxon>
        <taxon>Ascomycota</taxon>
        <taxon>Pezizomycotina</taxon>
        <taxon>Eurotiomycetes</taxon>
        <taxon>Eurotiomycetidae</taxon>
        <taxon>Eurotiales</taxon>
        <taxon>Aspergillaceae</taxon>
        <taxon>Aspergillus</taxon>
        <taxon>Aspergillus subgen. Fumigati</taxon>
    </lineage>
</organism>
<protein>
    <recommendedName>
        <fullName>Protein yop1</fullName>
    </recommendedName>
</protein>
<name>YOP1_ASPFU</name>
<proteinExistence type="inferred from homology"/>
<evidence type="ECO:0000250" key="1">
    <source>
        <dbReference type="UniProtKB" id="Q12402"/>
    </source>
</evidence>
<evidence type="ECO:0000255" key="2"/>
<evidence type="ECO:0000305" key="3"/>
<reference key="1">
    <citation type="journal article" date="2005" name="Nature">
        <title>Genomic sequence of the pathogenic and allergenic filamentous fungus Aspergillus fumigatus.</title>
        <authorList>
            <person name="Nierman W.C."/>
            <person name="Pain A."/>
            <person name="Anderson M.J."/>
            <person name="Wortman J.R."/>
            <person name="Kim H.S."/>
            <person name="Arroyo J."/>
            <person name="Berriman M."/>
            <person name="Abe K."/>
            <person name="Archer D.B."/>
            <person name="Bermejo C."/>
            <person name="Bennett J.W."/>
            <person name="Bowyer P."/>
            <person name="Chen D."/>
            <person name="Collins M."/>
            <person name="Coulsen R."/>
            <person name="Davies R."/>
            <person name="Dyer P.S."/>
            <person name="Farman M.L."/>
            <person name="Fedorova N."/>
            <person name="Fedorova N.D."/>
            <person name="Feldblyum T.V."/>
            <person name="Fischer R."/>
            <person name="Fosker N."/>
            <person name="Fraser A."/>
            <person name="Garcia J.L."/>
            <person name="Garcia M.J."/>
            <person name="Goble A."/>
            <person name="Goldman G.H."/>
            <person name="Gomi K."/>
            <person name="Griffith-Jones S."/>
            <person name="Gwilliam R."/>
            <person name="Haas B.J."/>
            <person name="Haas H."/>
            <person name="Harris D.E."/>
            <person name="Horiuchi H."/>
            <person name="Huang J."/>
            <person name="Humphray S."/>
            <person name="Jimenez J."/>
            <person name="Keller N."/>
            <person name="Khouri H."/>
            <person name="Kitamoto K."/>
            <person name="Kobayashi T."/>
            <person name="Konzack S."/>
            <person name="Kulkarni R."/>
            <person name="Kumagai T."/>
            <person name="Lafton A."/>
            <person name="Latge J.-P."/>
            <person name="Li W."/>
            <person name="Lord A."/>
            <person name="Lu C."/>
            <person name="Majoros W.H."/>
            <person name="May G.S."/>
            <person name="Miller B.L."/>
            <person name="Mohamoud Y."/>
            <person name="Molina M."/>
            <person name="Monod M."/>
            <person name="Mouyna I."/>
            <person name="Mulligan S."/>
            <person name="Murphy L.D."/>
            <person name="O'Neil S."/>
            <person name="Paulsen I."/>
            <person name="Penalva M.A."/>
            <person name="Pertea M."/>
            <person name="Price C."/>
            <person name="Pritchard B.L."/>
            <person name="Quail M.A."/>
            <person name="Rabbinowitsch E."/>
            <person name="Rawlins N."/>
            <person name="Rajandream M.A."/>
            <person name="Reichard U."/>
            <person name="Renauld H."/>
            <person name="Robson G.D."/>
            <person name="Rodriguez de Cordoba S."/>
            <person name="Rodriguez-Pena J.M."/>
            <person name="Ronning C.M."/>
            <person name="Rutter S."/>
            <person name="Salzberg S.L."/>
            <person name="Sanchez M."/>
            <person name="Sanchez-Ferrero J.C."/>
            <person name="Saunders D."/>
            <person name="Seeger K."/>
            <person name="Squares R."/>
            <person name="Squares S."/>
            <person name="Takeuchi M."/>
            <person name="Tekaia F."/>
            <person name="Turner G."/>
            <person name="Vazquez de Aldana C.R."/>
            <person name="Weidman J."/>
            <person name="White O."/>
            <person name="Woodward J.R."/>
            <person name="Yu J.-H."/>
            <person name="Fraser C.M."/>
            <person name="Galagan J.E."/>
            <person name="Asai K."/>
            <person name="Machida M."/>
            <person name="Hall N."/>
            <person name="Barrell B.G."/>
            <person name="Denning D.W."/>
        </authorList>
    </citation>
    <scope>NUCLEOTIDE SEQUENCE [LARGE SCALE GENOMIC DNA]</scope>
    <source>
        <strain>ATCC MYA-4609 / CBS 101355 / FGSC A1100 / Af293</strain>
    </source>
</reference>
<feature type="chain" id="PRO_0000101848" description="Protein yop1">
    <location>
        <begin position="1"/>
        <end position="169"/>
    </location>
</feature>
<feature type="topological domain" description="Cytoplasmic" evidence="1">
    <location>
        <begin position="1"/>
        <end position="35"/>
    </location>
</feature>
<feature type="transmembrane region" description="Helical" evidence="1">
    <location>
        <begin position="36"/>
        <end position="55"/>
    </location>
</feature>
<feature type="topological domain" description="Lumenal" evidence="1">
    <location>
        <position position="56"/>
    </location>
</feature>
<feature type="transmembrane region" description="Helical" evidence="1">
    <location>
        <begin position="57"/>
        <end position="76"/>
    </location>
</feature>
<feature type="topological domain" description="Cytoplasmic" evidence="1">
    <location>
        <begin position="77"/>
        <end position="86"/>
    </location>
</feature>
<feature type="transmembrane region" description="Helical" evidence="1">
    <location>
        <begin position="87"/>
        <end position="103"/>
    </location>
</feature>
<feature type="topological domain" description="Lumenal" evidence="1">
    <location>
        <begin position="104"/>
        <end position="105"/>
    </location>
</feature>
<feature type="transmembrane region" description="Helical" evidence="1">
    <location>
        <begin position="106"/>
        <end position="124"/>
    </location>
</feature>
<feature type="topological domain" description="Cytoplasmic" evidence="1">
    <location>
        <begin position="125"/>
        <end position="169"/>
    </location>
</feature>
<dbReference type="EMBL" id="AAHF01000003">
    <property type="protein sequence ID" value="EAL91963.1"/>
    <property type="molecule type" value="Genomic_DNA"/>
</dbReference>
<dbReference type="RefSeq" id="XP_754001.1">
    <property type="nucleotide sequence ID" value="XM_748908.1"/>
</dbReference>
<dbReference type="FunCoup" id="Q4WTW3">
    <property type="interactions" value="335"/>
</dbReference>
<dbReference type="STRING" id="330879.Q4WTW3"/>
<dbReference type="EnsemblFungi" id="EAL91963">
    <property type="protein sequence ID" value="EAL91963"/>
    <property type="gene ID" value="AFUA_5G06320"/>
</dbReference>
<dbReference type="GeneID" id="3511329"/>
<dbReference type="KEGG" id="afm:AFUA_5G06320"/>
<dbReference type="VEuPathDB" id="FungiDB:Afu5g06320"/>
<dbReference type="eggNOG" id="KOG1725">
    <property type="taxonomic scope" value="Eukaryota"/>
</dbReference>
<dbReference type="HOGENOM" id="CLU_028431_2_1_1"/>
<dbReference type="InParanoid" id="Q4WTW3"/>
<dbReference type="OMA" id="DTQYWVV"/>
<dbReference type="OrthoDB" id="10009287at2759"/>
<dbReference type="Proteomes" id="UP000002530">
    <property type="component" value="Chromosome 5"/>
</dbReference>
<dbReference type="GO" id="GO:0005789">
    <property type="term" value="C:endoplasmic reticulum membrane"/>
    <property type="evidence" value="ECO:0007669"/>
    <property type="project" value="UniProtKB-SubCell"/>
</dbReference>
<dbReference type="GO" id="GO:0000139">
    <property type="term" value="C:Golgi membrane"/>
    <property type="evidence" value="ECO:0007669"/>
    <property type="project" value="UniProtKB-SubCell"/>
</dbReference>
<dbReference type="InterPro" id="IPR004345">
    <property type="entry name" value="TB2_DP1_HVA22"/>
</dbReference>
<dbReference type="PANTHER" id="PTHR12300">
    <property type="entry name" value="HVA22-LIKE PROTEINS"/>
    <property type="match status" value="1"/>
</dbReference>
<dbReference type="PANTHER" id="PTHR12300:SF161">
    <property type="entry name" value="RECEPTOR EXPRESSION-ENHANCING PROTEIN"/>
    <property type="match status" value="1"/>
</dbReference>
<dbReference type="Pfam" id="PF03134">
    <property type="entry name" value="TB2_DP1_HVA22"/>
    <property type="match status" value="1"/>
</dbReference>
<keyword id="KW-0256">Endoplasmic reticulum</keyword>
<keyword id="KW-0333">Golgi apparatus</keyword>
<keyword id="KW-0472">Membrane</keyword>
<keyword id="KW-1185">Reference proteome</keyword>
<keyword id="KW-0812">Transmembrane</keyword>
<keyword id="KW-1133">Transmembrane helix</keyword>